<keyword id="KW-0029">Amino-acid transport</keyword>
<keyword id="KW-0997">Cell inner membrane</keyword>
<keyword id="KW-1003">Cell membrane</keyword>
<keyword id="KW-0472">Membrane</keyword>
<keyword id="KW-1185">Reference proteome</keyword>
<keyword id="KW-0812">Transmembrane</keyword>
<keyword id="KW-1133">Transmembrane helix</keyword>
<keyword id="KW-0813">Transport</keyword>
<gene>
    <name evidence="3" type="primary">frlA</name>
    <name type="synonym">yhfM</name>
    <name type="ordered locus">b3370</name>
    <name type="ordered locus">JW3333</name>
</gene>
<organism>
    <name type="scientific">Escherichia coli (strain K12)</name>
    <dbReference type="NCBI Taxonomy" id="83333"/>
    <lineage>
        <taxon>Bacteria</taxon>
        <taxon>Pseudomonadati</taxon>
        <taxon>Pseudomonadota</taxon>
        <taxon>Gammaproteobacteria</taxon>
        <taxon>Enterobacterales</taxon>
        <taxon>Enterobacteriaceae</taxon>
        <taxon>Escherichia</taxon>
    </lineage>
</organism>
<name>FRLA_ECOLI</name>
<feature type="chain" id="PRO_0000054247" description="Probable fructoselysine/psicoselysine transporter FrlA">
    <location>
        <begin position="1"/>
        <end position="445"/>
    </location>
</feature>
<feature type="transmembrane region" description="Helical" evidence="1">
    <location>
        <begin position="10"/>
        <end position="30"/>
    </location>
</feature>
<feature type="transmembrane region" description="Helical" evidence="1">
    <location>
        <begin position="38"/>
        <end position="58"/>
    </location>
</feature>
<feature type="transmembrane region" description="Helical" evidence="1">
    <location>
        <begin position="93"/>
        <end position="113"/>
    </location>
</feature>
<feature type="transmembrane region" description="Helical" evidence="1">
    <location>
        <begin position="121"/>
        <end position="141"/>
    </location>
</feature>
<feature type="transmembrane region" description="Helical" evidence="1">
    <location>
        <begin position="155"/>
        <end position="175"/>
    </location>
</feature>
<feature type="transmembrane region" description="Helical" evidence="1">
    <location>
        <begin position="181"/>
        <end position="201"/>
    </location>
</feature>
<feature type="transmembrane region" description="Helical" evidence="1">
    <location>
        <begin position="236"/>
        <end position="256"/>
    </location>
</feature>
<feature type="transmembrane region" description="Helical" evidence="1">
    <location>
        <begin position="273"/>
        <end position="293"/>
    </location>
</feature>
<feature type="transmembrane region" description="Helical" evidence="1">
    <location>
        <begin position="334"/>
        <end position="354"/>
    </location>
</feature>
<feature type="transmembrane region" description="Helical" evidence="1">
    <location>
        <begin position="355"/>
        <end position="375"/>
    </location>
</feature>
<feature type="transmembrane region" description="Helical" evidence="1">
    <location>
        <begin position="389"/>
        <end position="410"/>
    </location>
</feature>
<feature type="transmembrane region" description="Helical" evidence="1">
    <location>
        <begin position="417"/>
        <end position="435"/>
    </location>
</feature>
<evidence type="ECO:0000255" key="1"/>
<evidence type="ECO:0000269" key="2">
    <source>
    </source>
</evidence>
<evidence type="ECO:0000303" key="3">
    <source>
    </source>
</evidence>
<evidence type="ECO:0000305" key="4"/>
<evidence type="ECO:0000305" key="5">
    <source>
    </source>
</evidence>
<evidence type="ECO:0000305" key="6">
    <source>
    </source>
</evidence>
<proteinExistence type="evidence at transcript level"/>
<sequence>MGSQELQRKLGFWAVLAIAVGTTVGSGIFVSVGEVAKAAGTPWLTVLAFVIGGLIVIPQMCVYAELSTAYPENGADYVYLKNAGSRPLAFLSGWASFWANDAPSLSIMALAIVSNLGFLTPIDPLLGKFIAAGLIIAFMLLHLRSVEGGAAFQTLITIAKIIPFTIVIGLGIFWFKAENFAAPTTTAIGATGSFMALLAGISATSWSYTGMASICYMTGEIKNPGKTMPRALIGSCLLVLVLYTLLALVISGLMPFDKLANSETPISDALTWIPALGSTAGIFVAITAMIVILGSLSSCVMYQPRLEYAMAKDNLFFKCFGHVHPKYNTPDVSIILQGALGIFFIFVSDLTSLLGYFTLVMCFKNTLTFGSIIWCRKRDDYKPLWRTPAFGLMTTLAIASSLILVASTFVWAPIPGLICAVIVIATGLPAYAFWAKRSRQLNALS</sequence>
<reference key="1">
    <citation type="journal article" date="1997" name="Science">
        <title>The complete genome sequence of Escherichia coli K-12.</title>
        <authorList>
            <person name="Blattner F.R."/>
            <person name="Plunkett G. III"/>
            <person name="Bloch C.A."/>
            <person name="Perna N.T."/>
            <person name="Burland V."/>
            <person name="Riley M."/>
            <person name="Collado-Vides J."/>
            <person name="Glasner J.D."/>
            <person name="Rode C.K."/>
            <person name="Mayhew G.F."/>
            <person name="Gregor J."/>
            <person name="Davis N.W."/>
            <person name="Kirkpatrick H.A."/>
            <person name="Goeden M.A."/>
            <person name="Rose D.J."/>
            <person name="Mau B."/>
            <person name="Shao Y."/>
        </authorList>
    </citation>
    <scope>NUCLEOTIDE SEQUENCE [LARGE SCALE GENOMIC DNA]</scope>
    <source>
        <strain>K12 / MG1655 / ATCC 47076</strain>
    </source>
</reference>
<reference key="2">
    <citation type="journal article" date="2006" name="Mol. Syst. Biol.">
        <title>Highly accurate genome sequences of Escherichia coli K-12 strains MG1655 and W3110.</title>
        <authorList>
            <person name="Hayashi K."/>
            <person name="Morooka N."/>
            <person name="Yamamoto Y."/>
            <person name="Fujita K."/>
            <person name="Isono K."/>
            <person name="Choi S."/>
            <person name="Ohtsubo E."/>
            <person name="Baba T."/>
            <person name="Wanner B.L."/>
            <person name="Mori H."/>
            <person name="Horiuchi T."/>
        </authorList>
    </citation>
    <scope>NUCLEOTIDE SEQUENCE [LARGE SCALE GENOMIC DNA]</scope>
    <source>
        <strain>K12 / W3110 / ATCC 27325 / DSM 5911</strain>
    </source>
</reference>
<reference key="3">
    <citation type="journal article" date="2002" name="J. Biol. Chem.">
        <title>Identification of a pathway for the utilization of the Amadori product fructoselysine in Escherichia coli.</title>
        <authorList>
            <person name="Wiame E."/>
            <person name="Delpierre G."/>
            <person name="Collard F."/>
            <person name="Van Schaftingen E."/>
        </authorList>
    </citation>
    <scope>FUNCTION</scope>
    <scope>PATHWAY</scope>
    <scope>INDUCTION</scope>
</reference>
<reference key="4">
    <citation type="journal article" date="2004" name="Biochem. J.">
        <title>Fructoselysine 3-epimerase, an enzyme involved in the metabolism of the unusual Amadori compound psicoselysine in Escherichia coli.</title>
        <authorList>
            <person name="Wiame E."/>
            <person name="Van Schaftingen E."/>
        </authorList>
    </citation>
    <scope>FUNCTION</scope>
    <scope>DISRUPTION PHENOTYPE</scope>
    <scope>PATHWAY</scope>
</reference>
<accession>P45539</accession>
<accession>P76686</accession>
<accession>Q2M736</accession>
<protein>
    <recommendedName>
        <fullName>Probable fructoselysine/psicoselysine transporter FrlA</fullName>
    </recommendedName>
</protein>
<dbReference type="EMBL" id="U18997">
    <property type="protein sequence ID" value="AAA58167.1"/>
    <property type="status" value="ALT_SEQ"/>
    <property type="molecule type" value="Genomic_DNA"/>
</dbReference>
<dbReference type="EMBL" id="U00096">
    <property type="protein sequence ID" value="AAC76395.2"/>
    <property type="molecule type" value="Genomic_DNA"/>
</dbReference>
<dbReference type="EMBL" id="AP009048">
    <property type="protein sequence ID" value="BAE77920.1"/>
    <property type="molecule type" value="Genomic_DNA"/>
</dbReference>
<dbReference type="PIR" id="E65131">
    <property type="entry name" value="E65131"/>
</dbReference>
<dbReference type="RefSeq" id="NP_417829.2">
    <property type="nucleotide sequence ID" value="NC_000913.3"/>
</dbReference>
<dbReference type="RefSeq" id="WP_000535505.1">
    <property type="nucleotide sequence ID" value="NZ_STEB01000004.1"/>
</dbReference>
<dbReference type="SMR" id="P45539"/>
<dbReference type="BioGRID" id="4262479">
    <property type="interactions" value="5"/>
</dbReference>
<dbReference type="DIP" id="DIP-12322N"/>
<dbReference type="FunCoup" id="P45539">
    <property type="interactions" value="505"/>
</dbReference>
<dbReference type="IntAct" id="P45539">
    <property type="interactions" value="1"/>
</dbReference>
<dbReference type="STRING" id="511145.b3370"/>
<dbReference type="TCDB" id="2.A.3.8.17">
    <property type="family name" value="the amino acid-polyamine-organocation (apc) family"/>
</dbReference>
<dbReference type="PaxDb" id="511145-b3370"/>
<dbReference type="EnsemblBacteria" id="AAC76395">
    <property type="protein sequence ID" value="AAC76395"/>
    <property type="gene ID" value="b3370"/>
</dbReference>
<dbReference type="GeneID" id="93778627"/>
<dbReference type="GeneID" id="947878"/>
<dbReference type="KEGG" id="ecj:JW3333"/>
<dbReference type="KEGG" id="eco:b3370"/>
<dbReference type="KEGG" id="ecoc:C3026_18300"/>
<dbReference type="PATRIC" id="fig|1411691.4.peg.3359"/>
<dbReference type="EchoBASE" id="EB2745"/>
<dbReference type="eggNOG" id="COG0531">
    <property type="taxonomic scope" value="Bacteria"/>
</dbReference>
<dbReference type="HOGENOM" id="CLU_007946_3_4_6"/>
<dbReference type="InParanoid" id="P45539"/>
<dbReference type="OMA" id="TYWVISF"/>
<dbReference type="PhylomeDB" id="P45539"/>
<dbReference type="BioCyc" id="EcoCyc:YHFM-MONOMER"/>
<dbReference type="BioCyc" id="MetaCyc:YHFM-MONOMER"/>
<dbReference type="UniPathway" id="UPA00784"/>
<dbReference type="PRO" id="PR:P45539"/>
<dbReference type="Proteomes" id="UP000000625">
    <property type="component" value="Chromosome"/>
</dbReference>
<dbReference type="GO" id="GO:0005886">
    <property type="term" value="C:plasma membrane"/>
    <property type="evidence" value="ECO:0000314"/>
    <property type="project" value="EcoCyc"/>
</dbReference>
<dbReference type="GO" id="GO:0015179">
    <property type="term" value="F:L-amino acid transmembrane transporter activity"/>
    <property type="evidence" value="ECO:0000318"/>
    <property type="project" value="GO_Central"/>
</dbReference>
<dbReference type="GO" id="GO:0003333">
    <property type="term" value="P:amino acid transmembrane transport"/>
    <property type="evidence" value="ECO:0000318"/>
    <property type="project" value="GO_Central"/>
</dbReference>
<dbReference type="GO" id="GO:1901281">
    <property type="term" value="P:fructoselysine catabolic process"/>
    <property type="evidence" value="ECO:0000315"/>
    <property type="project" value="EcoCyc"/>
</dbReference>
<dbReference type="FunFam" id="1.20.1740.10:FF:000048">
    <property type="entry name" value="Fructoselysine transporter frlA"/>
    <property type="match status" value="1"/>
</dbReference>
<dbReference type="Gene3D" id="1.20.1740.10">
    <property type="entry name" value="Amino acid/polyamine transporter I"/>
    <property type="match status" value="1"/>
</dbReference>
<dbReference type="InterPro" id="IPR002293">
    <property type="entry name" value="AA/rel_permease1"/>
</dbReference>
<dbReference type="InterPro" id="IPR050598">
    <property type="entry name" value="AminoAcid_Transporter"/>
</dbReference>
<dbReference type="NCBIfam" id="NF008466">
    <property type="entry name" value="PRK11357.1"/>
    <property type="match status" value="1"/>
</dbReference>
<dbReference type="PANTHER" id="PTHR11785">
    <property type="entry name" value="AMINO ACID TRANSPORTER"/>
    <property type="match status" value="1"/>
</dbReference>
<dbReference type="PANTHER" id="PTHR11785:SF512">
    <property type="entry name" value="SOBREMESA, ISOFORM B"/>
    <property type="match status" value="1"/>
</dbReference>
<dbReference type="Pfam" id="PF13520">
    <property type="entry name" value="AA_permease_2"/>
    <property type="match status" value="1"/>
</dbReference>
<dbReference type="PIRSF" id="PIRSF006060">
    <property type="entry name" value="AA_transporter"/>
    <property type="match status" value="1"/>
</dbReference>
<comment type="function">
    <text evidence="5 6">Is likely involved in the transport of fructoselysine and psicoselysine to the cytoplasm, where they are degraded.</text>
</comment>
<comment type="catalytic activity">
    <reaction evidence="5 6">
        <text>N(6)-(D-fructosyl)-L-lysine(in) = N(6)-(D-fructosyl)-L-lysine(out)</text>
        <dbReference type="Rhea" id="RHEA:28454"/>
        <dbReference type="ChEBI" id="CHEBI:61393"/>
    </reaction>
    <physiologicalReaction direction="right-to-left" evidence="5 6">
        <dbReference type="Rhea" id="RHEA:28456"/>
    </physiologicalReaction>
</comment>
<comment type="catalytic activity">
    <reaction evidence="6">
        <text>N(6)-(D-psicosyl)-L-lysine(in) = N(6)-(D-psicosyl)-L-lysine(out)</text>
        <dbReference type="Rhea" id="RHEA:28450"/>
        <dbReference type="ChEBI" id="CHEBI:61403"/>
    </reaction>
    <physiologicalReaction direction="right-to-left" evidence="6">
        <dbReference type="Rhea" id="RHEA:28452"/>
    </physiologicalReaction>
</comment>
<comment type="pathway">
    <text evidence="2 5">Carbohydrate metabolism; fructoselysine degradation.</text>
</comment>
<comment type="subcellular location">
    <subcellularLocation>
        <location evidence="4">Cell inner membrane</location>
        <topology evidence="4">Multi-pass membrane protein</topology>
    </subcellularLocation>
</comment>
<comment type="induction">
    <text evidence="5">Induced by fructoselysine. Makes part of the frl operon with FrlB, FrlC, FrlD and FrlR.</text>
</comment>
<comment type="disruption phenotype">
    <text evidence="2">Cells lacking this gene are unable to grow on fructoselysine or psicoselysine, where they do grow on glucose.</text>
</comment>
<comment type="similarity">
    <text evidence="4">Belongs to the amino acid-polyamine-organocation (APC) superfamily.</text>
</comment>